<organism>
    <name type="scientific">Haemophilus influenzae (strain PittEE)</name>
    <dbReference type="NCBI Taxonomy" id="374930"/>
    <lineage>
        <taxon>Bacteria</taxon>
        <taxon>Pseudomonadati</taxon>
        <taxon>Pseudomonadota</taxon>
        <taxon>Gammaproteobacteria</taxon>
        <taxon>Pasteurellales</taxon>
        <taxon>Pasteurellaceae</taxon>
        <taxon>Haemophilus</taxon>
    </lineage>
</organism>
<dbReference type="EC" id="1.1.-.-" evidence="1"/>
<dbReference type="EMBL" id="CP000671">
    <property type="protein sequence ID" value="ABQ98094.1"/>
    <property type="molecule type" value="Genomic_DNA"/>
</dbReference>
<dbReference type="SMR" id="A5UBE3"/>
<dbReference type="KEGG" id="hip:CGSHiEE_03345"/>
<dbReference type="HOGENOM" id="CLU_020639_0_0_6"/>
<dbReference type="GO" id="GO:0005886">
    <property type="term" value="C:plasma membrane"/>
    <property type="evidence" value="ECO:0007669"/>
    <property type="project" value="UniProtKB-SubCell"/>
</dbReference>
<dbReference type="GO" id="GO:0010181">
    <property type="term" value="F:FMN binding"/>
    <property type="evidence" value="ECO:0007669"/>
    <property type="project" value="InterPro"/>
</dbReference>
<dbReference type="GO" id="GO:0004459">
    <property type="term" value="F:L-lactate dehydrogenase activity"/>
    <property type="evidence" value="ECO:0007669"/>
    <property type="project" value="UniProtKB-UniRule"/>
</dbReference>
<dbReference type="GO" id="GO:0009060">
    <property type="term" value="P:aerobic respiration"/>
    <property type="evidence" value="ECO:0007669"/>
    <property type="project" value="TreeGrafter"/>
</dbReference>
<dbReference type="GO" id="GO:0006089">
    <property type="term" value="P:lactate metabolic process"/>
    <property type="evidence" value="ECO:0007669"/>
    <property type="project" value="UniProtKB-UniRule"/>
</dbReference>
<dbReference type="CDD" id="cd02809">
    <property type="entry name" value="alpha_hydroxyacid_oxid_FMN"/>
    <property type="match status" value="1"/>
</dbReference>
<dbReference type="FunFam" id="3.20.20.70:FF:000029">
    <property type="entry name" value="L-lactate dehydrogenase"/>
    <property type="match status" value="1"/>
</dbReference>
<dbReference type="Gene3D" id="3.20.20.70">
    <property type="entry name" value="Aldolase class I"/>
    <property type="match status" value="1"/>
</dbReference>
<dbReference type="HAMAP" id="MF_01559">
    <property type="entry name" value="L_lact_dehydr"/>
    <property type="match status" value="1"/>
</dbReference>
<dbReference type="InterPro" id="IPR013785">
    <property type="entry name" value="Aldolase_TIM"/>
</dbReference>
<dbReference type="InterPro" id="IPR012133">
    <property type="entry name" value="Alpha-hydoxy_acid_DH_FMN"/>
</dbReference>
<dbReference type="InterPro" id="IPR000262">
    <property type="entry name" value="FMN-dep_DH"/>
</dbReference>
<dbReference type="InterPro" id="IPR037396">
    <property type="entry name" value="FMN_HAD"/>
</dbReference>
<dbReference type="InterPro" id="IPR008259">
    <property type="entry name" value="FMN_hydac_DH_AS"/>
</dbReference>
<dbReference type="InterPro" id="IPR020920">
    <property type="entry name" value="LldD"/>
</dbReference>
<dbReference type="NCBIfam" id="NF033901">
    <property type="entry name" value="L_lactate_LldD"/>
    <property type="match status" value="1"/>
</dbReference>
<dbReference type="NCBIfam" id="NF008398">
    <property type="entry name" value="PRK11197.1"/>
    <property type="match status" value="1"/>
</dbReference>
<dbReference type="PANTHER" id="PTHR10578:SF85">
    <property type="entry name" value="L-LACTATE DEHYDROGENASE"/>
    <property type="match status" value="1"/>
</dbReference>
<dbReference type="PANTHER" id="PTHR10578">
    <property type="entry name" value="S -2-HYDROXY-ACID OXIDASE-RELATED"/>
    <property type="match status" value="1"/>
</dbReference>
<dbReference type="Pfam" id="PF01070">
    <property type="entry name" value="FMN_dh"/>
    <property type="match status" value="1"/>
</dbReference>
<dbReference type="PIRSF" id="PIRSF000138">
    <property type="entry name" value="Al-hdrx_acd_dh"/>
    <property type="match status" value="1"/>
</dbReference>
<dbReference type="SUPFAM" id="SSF51395">
    <property type="entry name" value="FMN-linked oxidoreductases"/>
    <property type="match status" value="1"/>
</dbReference>
<dbReference type="PROSITE" id="PS00557">
    <property type="entry name" value="FMN_HYDROXY_ACID_DH_1"/>
    <property type="match status" value="1"/>
</dbReference>
<dbReference type="PROSITE" id="PS51349">
    <property type="entry name" value="FMN_HYDROXY_ACID_DH_2"/>
    <property type="match status" value="1"/>
</dbReference>
<protein>
    <recommendedName>
        <fullName evidence="1">L-lactate dehydrogenase</fullName>
        <ecNumber evidence="1">1.1.-.-</ecNumber>
    </recommendedName>
</protein>
<accession>A5UBE3</accession>
<keyword id="KW-0997">Cell inner membrane</keyword>
<keyword id="KW-1003">Cell membrane</keyword>
<keyword id="KW-0285">Flavoprotein</keyword>
<keyword id="KW-0288">FMN</keyword>
<keyword id="KW-0472">Membrane</keyword>
<keyword id="KW-0560">Oxidoreductase</keyword>
<evidence type="ECO:0000255" key="1">
    <source>
        <dbReference type="HAMAP-Rule" id="MF_01559"/>
    </source>
</evidence>
<gene>
    <name evidence="1" type="primary">lldD</name>
    <name type="ordered locus">CGSHiEE_03345</name>
</gene>
<reference key="1">
    <citation type="journal article" date="2007" name="Genome Biol.">
        <title>Characterization and modeling of the Haemophilus influenzae core and supragenomes based on the complete genomic sequences of Rd and 12 clinical nontypeable strains.</title>
        <authorList>
            <person name="Hogg J.S."/>
            <person name="Hu F.Z."/>
            <person name="Janto B."/>
            <person name="Boissy R."/>
            <person name="Hayes J."/>
            <person name="Keefe R."/>
            <person name="Post J.C."/>
            <person name="Ehrlich G.D."/>
        </authorList>
    </citation>
    <scope>NUCLEOTIDE SEQUENCE [LARGE SCALE GENOMIC DNA]</scope>
    <source>
        <strain>PittEE</strain>
    </source>
</reference>
<feature type="chain" id="PRO_1000068985" description="L-lactate dehydrogenase">
    <location>
        <begin position="1"/>
        <end position="381"/>
    </location>
</feature>
<feature type="domain" description="FMN hydroxy acid dehydrogenase" evidence="1">
    <location>
        <begin position="1"/>
        <end position="380"/>
    </location>
</feature>
<feature type="active site" description="Proton acceptor" evidence="1">
    <location>
        <position position="275"/>
    </location>
</feature>
<feature type="binding site" evidence="1">
    <location>
        <position position="24"/>
    </location>
    <ligand>
        <name>substrate</name>
    </ligand>
</feature>
<feature type="binding site" evidence="1">
    <location>
        <position position="106"/>
    </location>
    <ligand>
        <name>FMN</name>
        <dbReference type="ChEBI" id="CHEBI:58210"/>
    </ligand>
</feature>
<feature type="binding site" evidence="1">
    <location>
        <position position="127"/>
    </location>
    <ligand>
        <name>FMN</name>
        <dbReference type="ChEBI" id="CHEBI:58210"/>
    </ligand>
</feature>
<feature type="binding site" evidence="1">
    <location>
        <position position="129"/>
    </location>
    <ligand>
        <name>substrate</name>
    </ligand>
</feature>
<feature type="binding site" evidence="1">
    <location>
        <position position="155"/>
    </location>
    <ligand>
        <name>FMN</name>
        <dbReference type="ChEBI" id="CHEBI:58210"/>
    </ligand>
</feature>
<feature type="binding site" evidence="1">
    <location>
        <position position="164"/>
    </location>
    <ligand>
        <name>substrate</name>
    </ligand>
</feature>
<feature type="binding site" evidence="1">
    <location>
        <position position="251"/>
    </location>
    <ligand>
        <name>FMN</name>
        <dbReference type="ChEBI" id="CHEBI:58210"/>
    </ligand>
</feature>
<feature type="binding site" evidence="1">
    <location>
        <position position="278"/>
    </location>
    <ligand>
        <name>substrate</name>
    </ligand>
</feature>
<feature type="binding site" evidence="1">
    <location>
        <begin position="306"/>
        <end position="330"/>
    </location>
    <ligand>
        <name>FMN</name>
        <dbReference type="ChEBI" id="CHEBI:58210"/>
    </ligand>
</feature>
<sequence length="381" mass="41926">MIISSASDYREAARRRVPPFMFHYADGGSYAEQTLARNVSDLENIALRQRVLKDMSELDTSIELFGEKLSMPTILAPVGACGMYARRGEVQAAQAADNKGVPFTLSTVSICPIEEVAPAIKRPMWFQLYVLKDRGFMKNALERAKAAGCSTLVFTVDMPTPGARYRDMHSGMSGPYKEIRRVLQGFTHPFWAYDVGIKGKPHTLGNVSTYMGRQIGLDDYIGWLTENFDPSISWKDLEWIREFWEGPMVIKGILDPEDAKDAVRFGADGIVVSNHGGRQLDGVLSSARALPPIADAVKGDIKIIADSGIRNGLDIVRMLALGADATMLGRAFVYALGAAGRQGVENMLDIFKKEMRVAMTLTSNRTIADIKPEALVDLSKL</sequence>
<name>LLDD_HAEIE</name>
<comment type="function">
    <text evidence="1">Catalyzes the conversion of L-lactate to pyruvate. Is coupled to the respiratory chain.</text>
</comment>
<comment type="catalytic activity">
    <reaction evidence="1">
        <text>(S)-lactate + A = pyruvate + AH2</text>
        <dbReference type="Rhea" id="RHEA:45816"/>
        <dbReference type="ChEBI" id="CHEBI:13193"/>
        <dbReference type="ChEBI" id="CHEBI:15361"/>
        <dbReference type="ChEBI" id="CHEBI:16651"/>
        <dbReference type="ChEBI" id="CHEBI:17499"/>
    </reaction>
</comment>
<comment type="cofactor">
    <cofactor evidence="1">
        <name>FMN</name>
        <dbReference type="ChEBI" id="CHEBI:58210"/>
    </cofactor>
</comment>
<comment type="subcellular location">
    <subcellularLocation>
        <location evidence="1">Cell inner membrane</location>
        <topology evidence="1">Peripheral membrane protein</topology>
    </subcellularLocation>
</comment>
<comment type="similarity">
    <text evidence="1">Belongs to the FMN-dependent alpha-hydroxy acid dehydrogenase family.</text>
</comment>
<proteinExistence type="inferred from homology"/>